<proteinExistence type="inferred from homology"/>
<gene>
    <name evidence="1" type="primary">hemA</name>
    <name type="ordered locus">Mmc1_3644</name>
</gene>
<protein>
    <recommendedName>
        <fullName evidence="1">Glutamyl-tRNA reductase</fullName>
        <shortName evidence="1">GluTR</shortName>
        <ecNumber evidence="1">1.2.1.70</ecNumber>
    </recommendedName>
</protein>
<comment type="function">
    <text evidence="1">Catalyzes the NADPH-dependent reduction of glutamyl-tRNA(Glu) to glutamate 1-semialdehyde (GSA).</text>
</comment>
<comment type="catalytic activity">
    <reaction evidence="1">
        <text>(S)-4-amino-5-oxopentanoate + tRNA(Glu) + NADP(+) = L-glutamyl-tRNA(Glu) + NADPH + H(+)</text>
        <dbReference type="Rhea" id="RHEA:12344"/>
        <dbReference type="Rhea" id="RHEA-COMP:9663"/>
        <dbReference type="Rhea" id="RHEA-COMP:9680"/>
        <dbReference type="ChEBI" id="CHEBI:15378"/>
        <dbReference type="ChEBI" id="CHEBI:57501"/>
        <dbReference type="ChEBI" id="CHEBI:57783"/>
        <dbReference type="ChEBI" id="CHEBI:58349"/>
        <dbReference type="ChEBI" id="CHEBI:78442"/>
        <dbReference type="ChEBI" id="CHEBI:78520"/>
        <dbReference type="EC" id="1.2.1.70"/>
    </reaction>
</comment>
<comment type="pathway">
    <text evidence="1">Porphyrin-containing compound metabolism; protoporphyrin-IX biosynthesis; 5-aminolevulinate from L-glutamyl-tRNA(Glu): step 1/2.</text>
</comment>
<comment type="subunit">
    <text evidence="1">Homodimer.</text>
</comment>
<comment type="domain">
    <text evidence="1">Possesses an unusual extended V-shaped dimeric structure with each monomer consisting of three distinct domains arranged along a curved 'spinal' alpha-helix. The N-terminal catalytic domain specifically recognizes the glutamate moiety of the substrate. The second domain is the NADPH-binding domain, and the third C-terminal domain is responsible for dimerization.</text>
</comment>
<comment type="miscellaneous">
    <text evidence="1">During catalysis, the active site Cys acts as a nucleophile attacking the alpha-carbonyl group of tRNA-bound glutamate with the formation of a thioester intermediate between enzyme and glutamate, and the concomitant release of tRNA(Glu). The thioester intermediate is finally reduced by direct hydride transfer from NADPH, to form the product GSA.</text>
</comment>
<comment type="similarity">
    <text evidence="1">Belongs to the glutamyl-tRNA reductase family.</text>
</comment>
<feature type="chain" id="PRO_1000004633" description="Glutamyl-tRNA reductase">
    <location>
        <begin position="1"/>
        <end position="421"/>
    </location>
</feature>
<feature type="active site" description="Nucleophile" evidence="1">
    <location>
        <position position="50"/>
    </location>
</feature>
<feature type="binding site" evidence="1">
    <location>
        <begin position="49"/>
        <end position="52"/>
    </location>
    <ligand>
        <name>substrate</name>
    </ligand>
</feature>
<feature type="binding site" evidence="1">
    <location>
        <position position="109"/>
    </location>
    <ligand>
        <name>substrate</name>
    </ligand>
</feature>
<feature type="binding site" evidence="1">
    <location>
        <begin position="114"/>
        <end position="116"/>
    </location>
    <ligand>
        <name>substrate</name>
    </ligand>
</feature>
<feature type="binding site" evidence="1">
    <location>
        <position position="120"/>
    </location>
    <ligand>
        <name>substrate</name>
    </ligand>
</feature>
<feature type="binding site" evidence="1">
    <location>
        <begin position="189"/>
        <end position="194"/>
    </location>
    <ligand>
        <name>NADP(+)</name>
        <dbReference type="ChEBI" id="CHEBI:58349"/>
    </ligand>
</feature>
<feature type="site" description="Important for activity" evidence="1">
    <location>
        <position position="99"/>
    </location>
</feature>
<keyword id="KW-0521">NADP</keyword>
<keyword id="KW-0560">Oxidoreductase</keyword>
<keyword id="KW-0627">Porphyrin biosynthesis</keyword>
<keyword id="KW-1185">Reference proteome</keyword>
<organism>
    <name type="scientific">Magnetococcus marinus (strain ATCC BAA-1437 / JCM 17883 / MC-1)</name>
    <dbReference type="NCBI Taxonomy" id="156889"/>
    <lineage>
        <taxon>Bacteria</taxon>
        <taxon>Pseudomonadati</taxon>
        <taxon>Pseudomonadota</taxon>
        <taxon>Alphaproteobacteria</taxon>
        <taxon>Magnetococcales</taxon>
        <taxon>Magnetococcaceae</taxon>
        <taxon>Magnetococcus</taxon>
    </lineage>
</organism>
<reference key="1">
    <citation type="journal article" date="2009" name="Appl. Environ. Microbiol.">
        <title>Complete genome sequence of the chemolithoautotrophic marine magnetotactic coccus strain MC-1.</title>
        <authorList>
            <person name="Schubbe S."/>
            <person name="Williams T.J."/>
            <person name="Xie G."/>
            <person name="Kiss H.E."/>
            <person name="Brettin T.S."/>
            <person name="Martinez D."/>
            <person name="Ross C.A."/>
            <person name="Schuler D."/>
            <person name="Cox B.L."/>
            <person name="Nealson K.H."/>
            <person name="Bazylinski D.A."/>
        </authorList>
    </citation>
    <scope>NUCLEOTIDE SEQUENCE [LARGE SCALE GENOMIC DNA]</scope>
    <source>
        <strain>ATCC BAA-1437 / JCM 17883 / MC-1</strain>
    </source>
</reference>
<dbReference type="EC" id="1.2.1.70" evidence="1"/>
<dbReference type="EMBL" id="CP000471">
    <property type="protein sequence ID" value="ABK46129.1"/>
    <property type="molecule type" value="Genomic_DNA"/>
</dbReference>
<dbReference type="RefSeq" id="WP_011715182.1">
    <property type="nucleotide sequence ID" value="NC_008576.1"/>
</dbReference>
<dbReference type="SMR" id="A0LDT6"/>
<dbReference type="STRING" id="156889.Mmc1_3644"/>
<dbReference type="KEGG" id="mgm:Mmc1_3644"/>
<dbReference type="eggNOG" id="COG0373">
    <property type="taxonomic scope" value="Bacteria"/>
</dbReference>
<dbReference type="HOGENOM" id="CLU_035113_2_2_5"/>
<dbReference type="OrthoDB" id="110209at2"/>
<dbReference type="UniPathway" id="UPA00251">
    <property type="reaction ID" value="UER00316"/>
</dbReference>
<dbReference type="Proteomes" id="UP000002586">
    <property type="component" value="Chromosome"/>
</dbReference>
<dbReference type="GO" id="GO:0008883">
    <property type="term" value="F:glutamyl-tRNA reductase activity"/>
    <property type="evidence" value="ECO:0007669"/>
    <property type="project" value="UniProtKB-UniRule"/>
</dbReference>
<dbReference type="GO" id="GO:0050661">
    <property type="term" value="F:NADP binding"/>
    <property type="evidence" value="ECO:0007669"/>
    <property type="project" value="InterPro"/>
</dbReference>
<dbReference type="GO" id="GO:0019353">
    <property type="term" value="P:protoporphyrinogen IX biosynthetic process from glutamate"/>
    <property type="evidence" value="ECO:0007669"/>
    <property type="project" value="TreeGrafter"/>
</dbReference>
<dbReference type="CDD" id="cd05213">
    <property type="entry name" value="NAD_bind_Glutamyl_tRNA_reduct"/>
    <property type="match status" value="1"/>
</dbReference>
<dbReference type="FunFam" id="3.30.460.30:FF:000001">
    <property type="entry name" value="Glutamyl-tRNA reductase"/>
    <property type="match status" value="1"/>
</dbReference>
<dbReference type="FunFam" id="3.40.50.720:FF:000031">
    <property type="entry name" value="Glutamyl-tRNA reductase"/>
    <property type="match status" value="1"/>
</dbReference>
<dbReference type="Gene3D" id="3.30.460.30">
    <property type="entry name" value="Glutamyl-tRNA reductase, N-terminal domain"/>
    <property type="match status" value="1"/>
</dbReference>
<dbReference type="Gene3D" id="3.40.50.720">
    <property type="entry name" value="NAD(P)-binding Rossmann-like Domain"/>
    <property type="match status" value="1"/>
</dbReference>
<dbReference type="HAMAP" id="MF_00087">
    <property type="entry name" value="Glu_tRNA_reductase"/>
    <property type="match status" value="1"/>
</dbReference>
<dbReference type="InterPro" id="IPR000343">
    <property type="entry name" value="4pyrrol_synth_GluRdtase"/>
</dbReference>
<dbReference type="InterPro" id="IPR015896">
    <property type="entry name" value="4pyrrol_synth_GluRdtase_dimer"/>
</dbReference>
<dbReference type="InterPro" id="IPR015895">
    <property type="entry name" value="4pyrrol_synth_GluRdtase_N"/>
</dbReference>
<dbReference type="InterPro" id="IPR036453">
    <property type="entry name" value="GluRdtase_dimer_dom_sf"/>
</dbReference>
<dbReference type="InterPro" id="IPR036343">
    <property type="entry name" value="GluRdtase_N_sf"/>
</dbReference>
<dbReference type="InterPro" id="IPR036291">
    <property type="entry name" value="NAD(P)-bd_dom_sf"/>
</dbReference>
<dbReference type="InterPro" id="IPR006151">
    <property type="entry name" value="Shikm_DH/Glu-tRNA_Rdtase"/>
</dbReference>
<dbReference type="NCBIfam" id="TIGR01035">
    <property type="entry name" value="hemA"/>
    <property type="match status" value="1"/>
</dbReference>
<dbReference type="PANTHER" id="PTHR43013">
    <property type="entry name" value="GLUTAMYL-TRNA REDUCTASE"/>
    <property type="match status" value="1"/>
</dbReference>
<dbReference type="PANTHER" id="PTHR43013:SF1">
    <property type="entry name" value="GLUTAMYL-TRNA REDUCTASE"/>
    <property type="match status" value="1"/>
</dbReference>
<dbReference type="Pfam" id="PF00745">
    <property type="entry name" value="GlutR_dimer"/>
    <property type="match status" value="1"/>
</dbReference>
<dbReference type="Pfam" id="PF05201">
    <property type="entry name" value="GlutR_N"/>
    <property type="match status" value="1"/>
</dbReference>
<dbReference type="Pfam" id="PF01488">
    <property type="entry name" value="Shikimate_DH"/>
    <property type="match status" value="1"/>
</dbReference>
<dbReference type="PIRSF" id="PIRSF000445">
    <property type="entry name" value="4pyrrol_synth_GluRdtase"/>
    <property type="match status" value="1"/>
</dbReference>
<dbReference type="SUPFAM" id="SSF69742">
    <property type="entry name" value="Glutamyl tRNA-reductase catalytic, N-terminal domain"/>
    <property type="match status" value="1"/>
</dbReference>
<dbReference type="SUPFAM" id="SSF69075">
    <property type="entry name" value="Glutamyl tRNA-reductase dimerization domain"/>
    <property type="match status" value="1"/>
</dbReference>
<dbReference type="SUPFAM" id="SSF51735">
    <property type="entry name" value="NAD(P)-binding Rossmann-fold domains"/>
    <property type="match status" value="1"/>
</dbReference>
<accession>A0LDT6</accession>
<sequence length="421" mass="46617">MKLVVVGLNHKSAPVSLREKVAYSSDTLPRSLQALTRLDAVHEGTILSTCNRVEIYMASRDPDAAAAQTSQWIARDHALDPADVTPHLYTKAESEAVRHGFCVASSLDSMVLGEAQILGQMKQAYQDALSAGSTGVVLNRFFQHAFLTAKRVRTETSIAENSVSVASAAVDLAKRIFGDLSGHSCLLIGAGEMCELAARHLVTHGVKEVLVTNRTFSRAVDLAQQFDGHAFPIEALAENLHRADIVISSTGSTVYMVGPDMVKQALKSRRQRPIFLIDIAVPRDLDPEIGQVDSAFLYDMDDLNKIVNDNRQDRAEAAQAAMQIIEGETPLFIQWLDTLDVVPTIKQMRRKAEAAKDQLLQKHLAGWDLSDTDRQRVENLARQLVNKLMHDPTERLRSLTNEHDGDRYIDAARKLYKLDDD</sequence>
<name>HEM1_MAGMM</name>
<evidence type="ECO:0000255" key="1">
    <source>
        <dbReference type="HAMAP-Rule" id="MF_00087"/>
    </source>
</evidence>